<comment type="function">
    <text evidence="1">Cotranslationally removes the N-terminal methionine from nascent proteins. The N-terminal methionine is often cleaved when the second residue in the primary sequence is small and uncharged (Met-Ala-, Cys, Gly, Pro, Ser, Thr, or Val).</text>
</comment>
<comment type="catalytic activity">
    <reaction evidence="1">
        <text>Release of N-terminal amino acids, preferentially methionine, from peptides and arylamides.</text>
        <dbReference type="EC" id="3.4.11.18"/>
    </reaction>
</comment>
<comment type="cofactor">
    <cofactor evidence="1">
        <name>Co(2+)</name>
        <dbReference type="ChEBI" id="CHEBI:48828"/>
    </cofactor>
    <cofactor evidence="1">
        <name>Zn(2+)</name>
        <dbReference type="ChEBI" id="CHEBI:29105"/>
    </cofactor>
    <cofactor evidence="1">
        <name>Mn(2+)</name>
        <dbReference type="ChEBI" id="CHEBI:29035"/>
    </cofactor>
    <cofactor evidence="1">
        <name>Fe(2+)</name>
        <dbReference type="ChEBI" id="CHEBI:29033"/>
    </cofactor>
    <text evidence="1">Binds 2 divalent metal cations per subunit. Has a high-affinity and a low affinity metal-binding site. The true nature of the physiological cofactor is under debate. The enzyme is active with cobalt, zinc, manganese or divalent iron ions. Most likely, methionine aminopeptidases function as mononuclear Fe(2+)-metalloproteases under physiological conditions, and the catalytically relevant metal-binding site has been assigned to the histidine-containing high-affinity site.</text>
</comment>
<comment type="subcellular location">
    <subcellularLocation>
        <location evidence="1">Cytoplasm</location>
    </subcellularLocation>
</comment>
<comment type="similarity">
    <text evidence="1">Belongs to the peptidase M24A family. Methionine aminopeptidase eukaryotic type 2 subfamily.</text>
</comment>
<keyword id="KW-0031">Aminopeptidase</keyword>
<keyword id="KW-0963">Cytoplasm</keyword>
<keyword id="KW-0378">Hydrolase</keyword>
<keyword id="KW-0479">Metal-binding</keyword>
<keyword id="KW-0645">Protease</keyword>
<sequence length="435" mass="47572">MAAQVADGVADLKLDDTKSKPTNGTTQNGDAEHEDSDDDNEGEEGAAEGGEGAAKKKKKRKPRKKKKAGAAGASGPKTQTKPPRVPVHEIFLNDSYPEGEIHEYLNENSYRTTSEEKRHLDRMNNDFLTDYRRGAEIHRTVRQWARDWIKPGMSLTEIAEGIEDSVRALTGHQGLEDGDAQIAGMGFPTGLSINHCAAHYTPNAGNKMVVNYEDVMKVDFGVHINGRIVDSAFTLTFDPVYDNLVEACKAATNAGIKEAGIDVRMSDIGAAIQEVMESYEVEIKGETFPVKCIRNLNGHSIGHYTIHGGKTVPIVKGGDQTKMEEGETFAIETFGSTGKGYVRDDMETSHYAKRSDAPKVALRVSSAKTLLNSITKNFGTLPFCRRYLDRLGHDKYLLGLNNLVSAGIVEAYPPLCDIKGSYTAQSEHVSFFPSV</sequence>
<proteinExistence type="inferred from homology"/>
<accession>Q0UTI9</accession>
<gene>
    <name type="ORF">SNOG_04925</name>
</gene>
<name>MAP2_PHANO</name>
<protein>
    <recommendedName>
        <fullName evidence="1">Methionine aminopeptidase 2</fullName>
        <shortName evidence="1">MAP 2</shortName>
        <shortName evidence="1">MetAP 2</shortName>
        <ecNumber evidence="1">3.4.11.18</ecNumber>
    </recommendedName>
    <alternativeName>
        <fullName evidence="1">Peptidase M</fullName>
    </alternativeName>
</protein>
<feature type="chain" id="PRO_0000407662" description="Methionine aminopeptidase 2">
    <location>
        <begin position="1"/>
        <end position="435"/>
    </location>
</feature>
<feature type="region of interest" description="Disordered" evidence="2">
    <location>
        <begin position="1"/>
        <end position="87"/>
    </location>
</feature>
<feature type="compositionally biased region" description="Basic and acidic residues" evidence="2">
    <location>
        <begin position="10"/>
        <end position="19"/>
    </location>
</feature>
<feature type="compositionally biased region" description="Polar residues" evidence="2">
    <location>
        <begin position="20"/>
        <end position="29"/>
    </location>
</feature>
<feature type="compositionally biased region" description="Acidic residues" evidence="2">
    <location>
        <begin position="32"/>
        <end position="46"/>
    </location>
</feature>
<feature type="compositionally biased region" description="Basic residues" evidence="2">
    <location>
        <begin position="55"/>
        <end position="68"/>
    </location>
</feature>
<feature type="binding site" evidence="1">
    <location>
        <position position="199"/>
    </location>
    <ligand>
        <name>substrate</name>
    </ligand>
</feature>
<feature type="binding site" evidence="1">
    <location>
        <position position="219"/>
    </location>
    <ligand>
        <name>a divalent metal cation</name>
        <dbReference type="ChEBI" id="CHEBI:60240"/>
        <label>1</label>
    </ligand>
</feature>
<feature type="binding site" evidence="1">
    <location>
        <position position="230"/>
    </location>
    <ligand>
        <name>a divalent metal cation</name>
        <dbReference type="ChEBI" id="CHEBI:60240"/>
        <label>1</label>
    </ligand>
</feature>
<feature type="binding site" evidence="1">
    <location>
        <position position="230"/>
    </location>
    <ligand>
        <name>a divalent metal cation</name>
        <dbReference type="ChEBI" id="CHEBI:60240"/>
        <label>2</label>
        <note>catalytic</note>
    </ligand>
</feature>
<feature type="binding site" evidence="1">
    <location>
        <position position="299"/>
    </location>
    <ligand>
        <name>a divalent metal cation</name>
        <dbReference type="ChEBI" id="CHEBI:60240"/>
        <label>2</label>
        <note>catalytic</note>
    </ligand>
</feature>
<feature type="binding site" evidence="1">
    <location>
        <position position="307"/>
    </location>
    <ligand>
        <name>substrate</name>
    </ligand>
</feature>
<feature type="binding site" evidence="1">
    <location>
        <position position="332"/>
    </location>
    <ligand>
        <name>a divalent metal cation</name>
        <dbReference type="ChEBI" id="CHEBI:60240"/>
        <label>2</label>
        <note>catalytic</note>
    </ligand>
</feature>
<feature type="binding site" evidence="1">
    <location>
        <position position="427"/>
    </location>
    <ligand>
        <name>a divalent metal cation</name>
        <dbReference type="ChEBI" id="CHEBI:60240"/>
        <label>1</label>
    </ligand>
</feature>
<feature type="binding site" evidence="1">
    <location>
        <position position="427"/>
    </location>
    <ligand>
        <name>a divalent metal cation</name>
        <dbReference type="ChEBI" id="CHEBI:60240"/>
        <label>2</label>
        <note>catalytic</note>
    </ligand>
</feature>
<dbReference type="EC" id="3.4.11.18" evidence="1"/>
<dbReference type="EMBL" id="CH445331">
    <property type="protein sequence ID" value="EAT87316.1"/>
    <property type="molecule type" value="Genomic_DNA"/>
</dbReference>
<dbReference type="RefSeq" id="XP_001795338.1">
    <property type="nucleotide sequence ID" value="XM_001795286.1"/>
</dbReference>
<dbReference type="SMR" id="Q0UTI9"/>
<dbReference type="FunCoup" id="Q0UTI9">
    <property type="interactions" value="1108"/>
</dbReference>
<dbReference type="STRING" id="321614.Q0UTI9"/>
<dbReference type="EnsemblFungi" id="SNOT_04925">
    <property type="protein sequence ID" value="SNOT_04925"/>
    <property type="gene ID" value="SNOG_04925"/>
</dbReference>
<dbReference type="GeneID" id="5972213"/>
<dbReference type="KEGG" id="pno:SNOG_04925"/>
<dbReference type="VEuPathDB" id="FungiDB:JI435_049250"/>
<dbReference type="eggNOG" id="KOG2775">
    <property type="taxonomic scope" value="Eukaryota"/>
</dbReference>
<dbReference type="HOGENOM" id="CLU_015857_7_1_1"/>
<dbReference type="InParanoid" id="Q0UTI9"/>
<dbReference type="OMA" id="PFAKRWL"/>
<dbReference type="Proteomes" id="UP000001055">
    <property type="component" value="Unassembled WGS sequence"/>
</dbReference>
<dbReference type="GO" id="GO:0005737">
    <property type="term" value="C:cytoplasm"/>
    <property type="evidence" value="ECO:0000318"/>
    <property type="project" value="GO_Central"/>
</dbReference>
<dbReference type="GO" id="GO:0004177">
    <property type="term" value="F:aminopeptidase activity"/>
    <property type="evidence" value="ECO:0000318"/>
    <property type="project" value="GO_Central"/>
</dbReference>
<dbReference type="GO" id="GO:0004239">
    <property type="term" value="F:initiator methionyl aminopeptidase activity"/>
    <property type="evidence" value="ECO:0007669"/>
    <property type="project" value="UniProtKB-UniRule"/>
</dbReference>
<dbReference type="GO" id="GO:0046872">
    <property type="term" value="F:metal ion binding"/>
    <property type="evidence" value="ECO:0007669"/>
    <property type="project" value="UniProtKB-UniRule"/>
</dbReference>
<dbReference type="GO" id="GO:0070006">
    <property type="term" value="F:metalloaminopeptidase activity"/>
    <property type="evidence" value="ECO:0007669"/>
    <property type="project" value="UniProtKB-UniRule"/>
</dbReference>
<dbReference type="GO" id="GO:0008235">
    <property type="term" value="F:metalloexopeptidase activity"/>
    <property type="evidence" value="ECO:0000318"/>
    <property type="project" value="GO_Central"/>
</dbReference>
<dbReference type="GO" id="GO:0006508">
    <property type="term" value="P:proteolysis"/>
    <property type="evidence" value="ECO:0007669"/>
    <property type="project" value="UniProtKB-KW"/>
</dbReference>
<dbReference type="CDD" id="cd01088">
    <property type="entry name" value="MetAP2"/>
    <property type="match status" value="1"/>
</dbReference>
<dbReference type="Gene3D" id="3.90.230.10">
    <property type="entry name" value="Creatinase/methionine aminopeptidase superfamily"/>
    <property type="match status" value="1"/>
</dbReference>
<dbReference type="Gene3D" id="1.10.10.10">
    <property type="entry name" value="Winged helix-like DNA-binding domain superfamily/Winged helix DNA-binding domain"/>
    <property type="match status" value="1"/>
</dbReference>
<dbReference type="HAMAP" id="MF_03175">
    <property type="entry name" value="MetAP_2_euk"/>
    <property type="match status" value="1"/>
</dbReference>
<dbReference type="InterPro" id="IPR036005">
    <property type="entry name" value="Creatinase/aminopeptidase-like"/>
</dbReference>
<dbReference type="InterPro" id="IPR050247">
    <property type="entry name" value="Met_Aminopeptidase_Type2"/>
</dbReference>
<dbReference type="InterPro" id="IPR000994">
    <property type="entry name" value="Pept_M24"/>
</dbReference>
<dbReference type="InterPro" id="IPR001714">
    <property type="entry name" value="Pept_M24_MAP"/>
</dbReference>
<dbReference type="InterPro" id="IPR002468">
    <property type="entry name" value="Pept_M24A_MAP2"/>
</dbReference>
<dbReference type="InterPro" id="IPR018349">
    <property type="entry name" value="Pept_M24A_MAP2_BS"/>
</dbReference>
<dbReference type="InterPro" id="IPR036388">
    <property type="entry name" value="WH-like_DNA-bd_sf"/>
</dbReference>
<dbReference type="InterPro" id="IPR036390">
    <property type="entry name" value="WH_DNA-bd_sf"/>
</dbReference>
<dbReference type="NCBIfam" id="TIGR00501">
    <property type="entry name" value="met_pdase_II"/>
    <property type="match status" value="1"/>
</dbReference>
<dbReference type="PANTHER" id="PTHR45777">
    <property type="entry name" value="METHIONINE AMINOPEPTIDASE 2"/>
    <property type="match status" value="1"/>
</dbReference>
<dbReference type="PANTHER" id="PTHR45777:SF2">
    <property type="entry name" value="METHIONINE AMINOPEPTIDASE 2"/>
    <property type="match status" value="1"/>
</dbReference>
<dbReference type="Pfam" id="PF00557">
    <property type="entry name" value="Peptidase_M24"/>
    <property type="match status" value="1"/>
</dbReference>
<dbReference type="PRINTS" id="PR00599">
    <property type="entry name" value="MAPEPTIDASE"/>
</dbReference>
<dbReference type="SUPFAM" id="SSF55920">
    <property type="entry name" value="Creatinase/aminopeptidase"/>
    <property type="match status" value="1"/>
</dbReference>
<dbReference type="SUPFAM" id="SSF46785">
    <property type="entry name" value="Winged helix' DNA-binding domain"/>
    <property type="match status" value="1"/>
</dbReference>
<dbReference type="PROSITE" id="PS01202">
    <property type="entry name" value="MAP_2"/>
    <property type="match status" value="1"/>
</dbReference>
<evidence type="ECO:0000255" key="1">
    <source>
        <dbReference type="HAMAP-Rule" id="MF_03175"/>
    </source>
</evidence>
<evidence type="ECO:0000256" key="2">
    <source>
        <dbReference type="SAM" id="MobiDB-lite"/>
    </source>
</evidence>
<reference key="1">
    <citation type="journal article" date="2007" name="Plant Cell">
        <title>Dothideomycete-plant interactions illuminated by genome sequencing and EST analysis of the wheat pathogen Stagonospora nodorum.</title>
        <authorList>
            <person name="Hane J.K."/>
            <person name="Lowe R.G.T."/>
            <person name="Solomon P.S."/>
            <person name="Tan K.-C."/>
            <person name="Schoch C.L."/>
            <person name="Spatafora J.W."/>
            <person name="Crous P.W."/>
            <person name="Kodira C.D."/>
            <person name="Birren B.W."/>
            <person name="Galagan J.E."/>
            <person name="Torriani S.F.F."/>
            <person name="McDonald B.A."/>
            <person name="Oliver R.P."/>
        </authorList>
    </citation>
    <scope>NUCLEOTIDE SEQUENCE [LARGE SCALE GENOMIC DNA]</scope>
    <source>
        <strain>SN15 / ATCC MYA-4574 / FGSC 10173</strain>
    </source>
</reference>
<organism>
    <name type="scientific">Phaeosphaeria nodorum (strain SN15 / ATCC MYA-4574 / FGSC 10173)</name>
    <name type="common">Glume blotch fungus</name>
    <name type="synonym">Parastagonospora nodorum</name>
    <dbReference type="NCBI Taxonomy" id="321614"/>
    <lineage>
        <taxon>Eukaryota</taxon>
        <taxon>Fungi</taxon>
        <taxon>Dikarya</taxon>
        <taxon>Ascomycota</taxon>
        <taxon>Pezizomycotina</taxon>
        <taxon>Dothideomycetes</taxon>
        <taxon>Pleosporomycetidae</taxon>
        <taxon>Pleosporales</taxon>
        <taxon>Pleosporineae</taxon>
        <taxon>Phaeosphaeriaceae</taxon>
        <taxon>Parastagonospora</taxon>
    </lineage>
</organism>